<accession>Q67PE4</accession>
<proteinExistence type="inferred from homology"/>
<feature type="chain" id="PRO_1000071842" description="UPF0122 protein STH1464">
    <location>
        <begin position="1"/>
        <end position="107"/>
    </location>
</feature>
<keyword id="KW-1185">Reference proteome</keyword>
<comment type="function">
    <text evidence="1">Might take part in the signal recognition particle (SRP) pathway. This is inferred from the conservation of its genetic proximity to ftsY/ffh. May be a regulatory protein.</text>
</comment>
<comment type="similarity">
    <text evidence="1">Belongs to the UPF0122 family.</text>
</comment>
<evidence type="ECO:0000255" key="1">
    <source>
        <dbReference type="HAMAP-Rule" id="MF_00245"/>
    </source>
</evidence>
<sequence length="107" mass="12348">MKDVQRIALLFDFYGPLLTERQQELIRAYYLEDHSLAEIADADGVSRQAVHELIRRSEAALQEYEQRLGFVAEHQRRLRLLDELQEALDRADLSAARRALAALRAEA</sequence>
<protein>
    <recommendedName>
        <fullName evidence="1">UPF0122 protein STH1464</fullName>
    </recommendedName>
</protein>
<reference key="1">
    <citation type="journal article" date="2004" name="Nucleic Acids Res.">
        <title>Genome sequence of Symbiobacterium thermophilum, an uncultivable bacterium that depends on microbial commensalism.</title>
        <authorList>
            <person name="Ueda K."/>
            <person name="Yamashita A."/>
            <person name="Ishikawa J."/>
            <person name="Shimada M."/>
            <person name="Watsuji T."/>
            <person name="Morimura K."/>
            <person name="Ikeda H."/>
            <person name="Hattori M."/>
            <person name="Beppu T."/>
        </authorList>
    </citation>
    <scope>NUCLEOTIDE SEQUENCE [LARGE SCALE GENOMIC DNA]</scope>
    <source>
        <strain>DSM 24528 / JCM 14929 / IAM 14863 / T</strain>
    </source>
</reference>
<organism>
    <name type="scientific">Symbiobacterium thermophilum (strain DSM 24528 / JCM 14929 / IAM 14863 / T)</name>
    <dbReference type="NCBI Taxonomy" id="292459"/>
    <lineage>
        <taxon>Bacteria</taxon>
        <taxon>Bacillati</taxon>
        <taxon>Bacillota</taxon>
        <taxon>Clostridia</taxon>
        <taxon>Eubacteriales</taxon>
        <taxon>Symbiobacteriaceae</taxon>
        <taxon>Symbiobacterium</taxon>
    </lineage>
</organism>
<dbReference type="EMBL" id="AP006840">
    <property type="protein sequence ID" value="BAD40449.1"/>
    <property type="molecule type" value="Genomic_DNA"/>
</dbReference>
<dbReference type="RefSeq" id="WP_011195594.1">
    <property type="nucleotide sequence ID" value="NC_006177.1"/>
</dbReference>
<dbReference type="SMR" id="Q67PE4"/>
<dbReference type="STRING" id="292459.STH1464"/>
<dbReference type="KEGG" id="sth:STH1464"/>
<dbReference type="eggNOG" id="COG2739">
    <property type="taxonomic scope" value="Bacteria"/>
</dbReference>
<dbReference type="HOGENOM" id="CLU_129218_1_0_9"/>
<dbReference type="OrthoDB" id="6392at2"/>
<dbReference type="Proteomes" id="UP000000417">
    <property type="component" value="Chromosome"/>
</dbReference>
<dbReference type="Gene3D" id="1.10.10.10">
    <property type="entry name" value="Winged helix-like DNA-binding domain superfamily/Winged helix DNA-binding domain"/>
    <property type="match status" value="1"/>
</dbReference>
<dbReference type="HAMAP" id="MF_00245">
    <property type="entry name" value="UPF0122"/>
    <property type="match status" value="1"/>
</dbReference>
<dbReference type="InterPro" id="IPR013324">
    <property type="entry name" value="RNA_pol_sigma_r3/r4-like"/>
</dbReference>
<dbReference type="InterPro" id="IPR007394">
    <property type="entry name" value="UPF0122"/>
</dbReference>
<dbReference type="InterPro" id="IPR054831">
    <property type="entry name" value="UPF0122_fam_protein"/>
</dbReference>
<dbReference type="InterPro" id="IPR036388">
    <property type="entry name" value="WH-like_DNA-bd_sf"/>
</dbReference>
<dbReference type="NCBIfam" id="NF045758">
    <property type="entry name" value="YlxM"/>
    <property type="match status" value="1"/>
</dbReference>
<dbReference type="PANTHER" id="PTHR40083">
    <property type="entry name" value="UPF0122 PROTEIN CBO2450/CLC_2298"/>
    <property type="match status" value="1"/>
</dbReference>
<dbReference type="PANTHER" id="PTHR40083:SF1">
    <property type="entry name" value="UPF0122 PROTEIN YLXM"/>
    <property type="match status" value="1"/>
</dbReference>
<dbReference type="Pfam" id="PF04297">
    <property type="entry name" value="UPF0122"/>
    <property type="match status" value="1"/>
</dbReference>
<dbReference type="SUPFAM" id="SSF88659">
    <property type="entry name" value="Sigma3 and sigma4 domains of RNA polymerase sigma factors"/>
    <property type="match status" value="1"/>
</dbReference>
<gene>
    <name type="ordered locus">STH1464</name>
</gene>
<name>Y1464_SYMTH</name>